<dbReference type="EC" id="5.6.1.7" evidence="1"/>
<dbReference type="EMBL" id="CP000252">
    <property type="protein sequence ID" value="ABC75928.1"/>
    <property type="molecule type" value="Genomic_DNA"/>
</dbReference>
<dbReference type="RefSeq" id="WP_011415963.1">
    <property type="nucleotide sequence ID" value="NC_007759.1"/>
</dbReference>
<dbReference type="SMR" id="Q2LPJ8"/>
<dbReference type="FunCoup" id="Q2LPJ8">
    <property type="interactions" value="668"/>
</dbReference>
<dbReference type="STRING" id="56780.SYN_00027"/>
<dbReference type="KEGG" id="sat:SYN_00027"/>
<dbReference type="eggNOG" id="COG0459">
    <property type="taxonomic scope" value="Bacteria"/>
</dbReference>
<dbReference type="HOGENOM" id="CLU_016503_3_0_7"/>
<dbReference type="InParanoid" id="Q2LPJ8"/>
<dbReference type="OrthoDB" id="9766614at2"/>
<dbReference type="Proteomes" id="UP000001933">
    <property type="component" value="Chromosome"/>
</dbReference>
<dbReference type="GO" id="GO:0005737">
    <property type="term" value="C:cytoplasm"/>
    <property type="evidence" value="ECO:0007669"/>
    <property type="project" value="UniProtKB-SubCell"/>
</dbReference>
<dbReference type="GO" id="GO:0005524">
    <property type="term" value="F:ATP binding"/>
    <property type="evidence" value="ECO:0007669"/>
    <property type="project" value="UniProtKB-UniRule"/>
</dbReference>
<dbReference type="GO" id="GO:0140662">
    <property type="term" value="F:ATP-dependent protein folding chaperone"/>
    <property type="evidence" value="ECO:0007669"/>
    <property type="project" value="InterPro"/>
</dbReference>
<dbReference type="GO" id="GO:0016853">
    <property type="term" value="F:isomerase activity"/>
    <property type="evidence" value="ECO:0007669"/>
    <property type="project" value="UniProtKB-KW"/>
</dbReference>
<dbReference type="GO" id="GO:0051082">
    <property type="term" value="F:unfolded protein binding"/>
    <property type="evidence" value="ECO:0007669"/>
    <property type="project" value="UniProtKB-UniRule"/>
</dbReference>
<dbReference type="GO" id="GO:0042026">
    <property type="term" value="P:protein refolding"/>
    <property type="evidence" value="ECO:0007669"/>
    <property type="project" value="UniProtKB-UniRule"/>
</dbReference>
<dbReference type="CDD" id="cd03344">
    <property type="entry name" value="GroEL"/>
    <property type="match status" value="1"/>
</dbReference>
<dbReference type="FunFam" id="3.50.7.10:FF:000001">
    <property type="entry name" value="60 kDa chaperonin"/>
    <property type="match status" value="1"/>
</dbReference>
<dbReference type="Gene3D" id="3.50.7.10">
    <property type="entry name" value="GroEL"/>
    <property type="match status" value="1"/>
</dbReference>
<dbReference type="Gene3D" id="1.10.560.10">
    <property type="entry name" value="GroEL-like equatorial domain"/>
    <property type="match status" value="1"/>
</dbReference>
<dbReference type="Gene3D" id="3.30.260.10">
    <property type="entry name" value="TCP-1-like chaperonin intermediate domain"/>
    <property type="match status" value="1"/>
</dbReference>
<dbReference type="HAMAP" id="MF_00600">
    <property type="entry name" value="CH60"/>
    <property type="match status" value="1"/>
</dbReference>
<dbReference type="InterPro" id="IPR018370">
    <property type="entry name" value="Chaperonin_Cpn60_CS"/>
</dbReference>
<dbReference type="InterPro" id="IPR001844">
    <property type="entry name" value="Cpn60/GroEL"/>
</dbReference>
<dbReference type="InterPro" id="IPR002423">
    <property type="entry name" value="Cpn60/GroEL/TCP-1"/>
</dbReference>
<dbReference type="InterPro" id="IPR027409">
    <property type="entry name" value="GroEL-like_apical_dom_sf"/>
</dbReference>
<dbReference type="InterPro" id="IPR027413">
    <property type="entry name" value="GROEL-like_equatorial_sf"/>
</dbReference>
<dbReference type="InterPro" id="IPR027410">
    <property type="entry name" value="TCP-1-like_intermed_sf"/>
</dbReference>
<dbReference type="NCBIfam" id="TIGR02348">
    <property type="entry name" value="GroEL"/>
    <property type="match status" value="1"/>
</dbReference>
<dbReference type="NCBIfam" id="NF000592">
    <property type="entry name" value="PRK00013.1"/>
    <property type="match status" value="1"/>
</dbReference>
<dbReference type="NCBIfam" id="NF009487">
    <property type="entry name" value="PRK12849.1"/>
    <property type="match status" value="1"/>
</dbReference>
<dbReference type="NCBIfam" id="NF009488">
    <property type="entry name" value="PRK12850.1"/>
    <property type="match status" value="1"/>
</dbReference>
<dbReference type="NCBIfam" id="NF009489">
    <property type="entry name" value="PRK12851.1"/>
    <property type="match status" value="1"/>
</dbReference>
<dbReference type="PANTHER" id="PTHR45633">
    <property type="entry name" value="60 KDA HEAT SHOCK PROTEIN, MITOCHONDRIAL"/>
    <property type="match status" value="1"/>
</dbReference>
<dbReference type="Pfam" id="PF00118">
    <property type="entry name" value="Cpn60_TCP1"/>
    <property type="match status" value="1"/>
</dbReference>
<dbReference type="PRINTS" id="PR00298">
    <property type="entry name" value="CHAPERONIN60"/>
</dbReference>
<dbReference type="SUPFAM" id="SSF52029">
    <property type="entry name" value="GroEL apical domain-like"/>
    <property type="match status" value="1"/>
</dbReference>
<dbReference type="SUPFAM" id="SSF48592">
    <property type="entry name" value="GroEL equatorial domain-like"/>
    <property type="match status" value="1"/>
</dbReference>
<dbReference type="SUPFAM" id="SSF54849">
    <property type="entry name" value="GroEL-intermediate domain like"/>
    <property type="match status" value="1"/>
</dbReference>
<dbReference type="PROSITE" id="PS00296">
    <property type="entry name" value="CHAPERONINS_CPN60"/>
    <property type="match status" value="1"/>
</dbReference>
<organism>
    <name type="scientific">Syntrophus aciditrophicus (strain SB)</name>
    <dbReference type="NCBI Taxonomy" id="56780"/>
    <lineage>
        <taxon>Bacteria</taxon>
        <taxon>Pseudomonadati</taxon>
        <taxon>Thermodesulfobacteriota</taxon>
        <taxon>Syntrophia</taxon>
        <taxon>Syntrophales</taxon>
        <taxon>Syntrophaceae</taxon>
        <taxon>Syntrophus</taxon>
    </lineage>
</organism>
<sequence>MAAKEIKYDSVARDKVMKGVDTLANAVKVTLGPRGRNVVIEKAWGGPTITKDGVTVAKEIELEDKFENMGAQMVREVASKTSDMAGDGTTTATILAQAIYREGTKLAAAGMNPMSLKRGIDKSVQLVIDELKKISKDIRDKKEITQVGTISANNDNTIGEIISEAMEKVGKEGVITVEEAKGMETTLEIVEGMQFDRGYVSPYFVTDPEKMEVVMEDPYILLYDKKISVMQDLVPILEQIARSGRPMLIVSEDLEGEALATLVVNNIRGTLKCAAVKAPGFGDRRKAMLEDIAILTGGKVVSEELGIKLDSITLTDLGTCKRLHITKDNTTIVDGAGSQADIEGRVKQIRTQIEETTSDYDREKLQERLAKLVGGVAVIKVGAATEIEMKEKKARVEDALHATRAAVEEGIVPGGGVALLRTLPALAGMDLPDDERPGLNIVKRAVEEPMRQIAANAGFEGSIVVEKVKENTGNFGFNADTEKYVDMMEAGIIDPTKVVRFALQNAASVASLLLTTEAMIAEAPKKKGAGMPGGMPPDMGDMEY</sequence>
<accession>Q2LPJ8</accession>
<reference key="1">
    <citation type="journal article" date="2007" name="Proc. Natl. Acad. Sci. U.S.A.">
        <title>The genome of Syntrophus aciditrophicus: life at the thermodynamic limit of microbial growth.</title>
        <authorList>
            <person name="McInerney M.J."/>
            <person name="Rohlin L."/>
            <person name="Mouttaki H."/>
            <person name="Kim U."/>
            <person name="Krupp R.S."/>
            <person name="Rios-Hernandez L."/>
            <person name="Sieber J."/>
            <person name="Struchtemeyer C.G."/>
            <person name="Bhattacharyya A."/>
            <person name="Campbell J.W."/>
            <person name="Gunsalus R.P."/>
        </authorList>
    </citation>
    <scope>NUCLEOTIDE SEQUENCE [LARGE SCALE GENOMIC DNA]</scope>
    <source>
        <strain>SB</strain>
    </source>
</reference>
<name>CH601_SYNAS</name>
<keyword id="KW-0067">ATP-binding</keyword>
<keyword id="KW-0143">Chaperone</keyword>
<keyword id="KW-0963">Cytoplasm</keyword>
<keyword id="KW-0413">Isomerase</keyword>
<keyword id="KW-0547">Nucleotide-binding</keyword>
<keyword id="KW-1185">Reference proteome</keyword>
<feature type="chain" id="PRO_0000257010" description="Chaperonin GroEL 1">
    <location>
        <begin position="1"/>
        <end position="544"/>
    </location>
</feature>
<feature type="binding site" evidence="1">
    <location>
        <begin position="30"/>
        <end position="33"/>
    </location>
    <ligand>
        <name>ATP</name>
        <dbReference type="ChEBI" id="CHEBI:30616"/>
    </ligand>
</feature>
<feature type="binding site" evidence="1">
    <location>
        <position position="51"/>
    </location>
    <ligand>
        <name>ATP</name>
        <dbReference type="ChEBI" id="CHEBI:30616"/>
    </ligand>
</feature>
<feature type="binding site" evidence="1">
    <location>
        <begin position="87"/>
        <end position="91"/>
    </location>
    <ligand>
        <name>ATP</name>
        <dbReference type="ChEBI" id="CHEBI:30616"/>
    </ligand>
</feature>
<feature type="binding site" evidence="1">
    <location>
        <position position="415"/>
    </location>
    <ligand>
        <name>ATP</name>
        <dbReference type="ChEBI" id="CHEBI:30616"/>
    </ligand>
</feature>
<feature type="binding site" evidence="1">
    <location>
        <position position="494"/>
    </location>
    <ligand>
        <name>ATP</name>
        <dbReference type="ChEBI" id="CHEBI:30616"/>
    </ligand>
</feature>
<protein>
    <recommendedName>
        <fullName evidence="1">Chaperonin GroEL 1</fullName>
        <ecNumber evidence="1">5.6.1.7</ecNumber>
    </recommendedName>
    <alternativeName>
        <fullName evidence="1">60 kDa chaperonin 1</fullName>
    </alternativeName>
    <alternativeName>
        <fullName evidence="1">Chaperonin-60 1</fullName>
        <shortName evidence="1">Cpn60 1</shortName>
    </alternativeName>
</protein>
<proteinExistence type="inferred from homology"/>
<comment type="function">
    <text evidence="1">Together with its co-chaperonin GroES, plays an essential role in assisting protein folding. The GroEL-GroES system forms a nano-cage that allows encapsulation of the non-native substrate proteins and provides a physical environment optimized to promote and accelerate protein folding.</text>
</comment>
<comment type="catalytic activity">
    <reaction evidence="1">
        <text>ATP + H2O + a folded polypeptide = ADP + phosphate + an unfolded polypeptide.</text>
        <dbReference type="EC" id="5.6.1.7"/>
    </reaction>
</comment>
<comment type="subunit">
    <text evidence="1">Forms a cylinder of 14 subunits composed of two heptameric rings stacked back-to-back. Interacts with the co-chaperonin GroES.</text>
</comment>
<comment type="subcellular location">
    <subcellularLocation>
        <location evidence="1">Cytoplasm</location>
    </subcellularLocation>
</comment>
<comment type="similarity">
    <text evidence="1">Belongs to the chaperonin (HSP60) family.</text>
</comment>
<evidence type="ECO:0000255" key="1">
    <source>
        <dbReference type="HAMAP-Rule" id="MF_00600"/>
    </source>
</evidence>
<gene>
    <name evidence="1" type="primary">groEL1</name>
    <name evidence="1" type="synonym">groL1</name>
    <name type="ordered locus">SYNAS_00490</name>
    <name type="ORF">SYN_00027</name>
</gene>